<protein>
    <recommendedName>
        <fullName evidence="1">D-amino acid dehydrogenase</fullName>
        <ecNumber evidence="1">1.4.99.-</ecNumber>
    </recommendedName>
</protein>
<gene>
    <name evidence="1" type="primary">dadA</name>
    <name type="ordered locus">Daci_3117</name>
</gene>
<evidence type="ECO:0000255" key="1">
    <source>
        <dbReference type="HAMAP-Rule" id="MF_01202"/>
    </source>
</evidence>
<name>DADA_DELAS</name>
<reference key="1">
    <citation type="submission" date="2007-11" db="EMBL/GenBank/DDBJ databases">
        <title>Complete sequence of Delftia acidovorans DSM 14801 / SPH-1.</title>
        <authorList>
            <person name="Copeland A."/>
            <person name="Lucas S."/>
            <person name="Lapidus A."/>
            <person name="Barry K."/>
            <person name="Glavina del Rio T."/>
            <person name="Dalin E."/>
            <person name="Tice H."/>
            <person name="Pitluck S."/>
            <person name="Lowry S."/>
            <person name="Clum A."/>
            <person name="Schmutz J."/>
            <person name="Larimer F."/>
            <person name="Land M."/>
            <person name="Hauser L."/>
            <person name="Kyrpides N."/>
            <person name="Kim E."/>
            <person name="Schleheck D."/>
            <person name="Richardson P."/>
        </authorList>
    </citation>
    <scope>NUCLEOTIDE SEQUENCE [LARGE SCALE GENOMIC DNA]</scope>
    <source>
        <strain>DSM 14801 / SPH-1</strain>
    </source>
</reference>
<accession>A9BU40</accession>
<sequence>MKVLVLGGGVIGVTSAYYLARAGAEVTVLDRQDAPASETSFANAGQVSPGYSTPWAAPGIPLKALKWMLQEHAPLAVRLDGSLFQLRWMAQMLRNCSAQRYAVNKERMMRVAEYSRSCLQQLRADTGIAYEQRTGGTLQLFRTQAQLDAVERDVAVLRECAVPFELLDRDQLAQVEPALAQARDRLTGGLRLPKDETGDCHRFTNELARIATGLGVELRFNQNVDGLVVEGGRIAGVRVNGELLTADRYVMAFGSYSRQALEPLGLDLPVYPVKGYSLTVPLGNPALAPQSTVLDETYKIAVTRFDDRIRVGGMAELGGFDLRLDPRRRATLELVVNDLFPGGDVARASFWTGLRPMTPDGTPIIGATRYANLFLNTGHGTLGWTMACGSGRLIADLITGRSPEISTDGLALDRYTHRPARHLGGSSTPVSA</sequence>
<comment type="function">
    <text evidence="1">Oxidative deamination of D-amino acids.</text>
</comment>
<comment type="catalytic activity">
    <reaction evidence="1">
        <text>a D-alpha-amino acid + A + H2O = a 2-oxocarboxylate + AH2 + NH4(+)</text>
        <dbReference type="Rhea" id="RHEA:18125"/>
        <dbReference type="ChEBI" id="CHEBI:13193"/>
        <dbReference type="ChEBI" id="CHEBI:15377"/>
        <dbReference type="ChEBI" id="CHEBI:17499"/>
        <dbReference type="ChEBI" id="CHEBI:28938"/>
        <dbReference type="ChEBI" id="CHEBI:35179"/>
        <dbReference type="ChEBI" id="CHEBI:59871"/>
    </reaction>
</comment>
<comment type="cofactor">
    <cofactor evidence="1">
        <name>FAD</name>
        <dbReference type="ChEBI" id="CHEBI:57692"/>
    </cofactor>
</comment>
<comment type="pathway">
    <text>Amino-acid degradation; D-alanine degradation; NH(3) and pyruvate from D-alanine: step 1/1.</text>
</comment>
<comment type="similarity">
    <text evidence="1">Belongs to the DadA oxidoreductase family.</text>
</comment>
<proteinExistence type="inferred from homology"/>
<dbReference type="EC" id="1.4.99.-" evidence="1"/>
<dbReference type="EMBL" id="CP000884">
    <property type="protein sequence ID" value="ABX35755.1"/>
    <property type="molecule type" value="Genomic_DNA"/>
</dbReference>
<dbReference type="RefSeq" id="WP_012204956.1">
    <property type="nucleotide sequence ID" value="NC_010002.1"/>
</dbReference>
<dbReference type="SMR" id="A9BU40"/>
<dbReference type="STRING" id="398578.Daci_3117"/>
<dbReference type="GeneID" id="24115906"/>
<dbReference type="KEGG" id="dac:Daci_3117"/>
<dbReference type="eggNOG" id="COG0665">
    <property type="taxonomic scope" value="Bacteria"/>
</dbReference>
<dbReference type="HOGENOM" id="CLU_007884_9_2_4"/>
<dbReference type="UniPathway" id="UPA00043">
    <property type="reaction ID" value="UER00498"/>
</dbReference>
<dbReference type="Proteomes" id="UP000000784">
    <property type="component" value="Chromosome"/>
</dbReference>
<dbReference type="GO" id="GO:0005737">
    <property type="term" value="C:cytoplasm"/>
    <property type="evidence" value="ECO:0007669"/>
    <property type="project" value="TreeGrafter"/>
</dbReference>
<dbReference type="GO" id="GO:0005886">
    <property type="term" value="C:plasma membrane"/>
    <property type="evidence" value="ECO:0007669"/>
    <property type="project" value="TreeGrafter"/>
</dbReference>
<dbReference type="GO" id="GO:0008718">
    <property type="term" value="F:D-amino-acid dehydrogenase activity"/>
    <property type="evidence" value="ECO:0007669"/>
    <property type="project" value="UniProtKB-UniRule"/>
</dbReference>
<dbReference type="GO" id="GO:0055130">
    <property type="term" value="P:D-alanine catabolic process"/>
    <property type="evidence" value="ECO:0007669"/>
    <property type="project" value="UniProtKB-UniPathway"/>
</dbReference>
<dbReference type="FunFam" id="3.50.50.60:FF:000020">
    <property type="entry name" value="D-amino acid dehydrogenase"/>
    <property type="match status" value="1"/>
</dbReference>
<dbReference type="Gene3D" id="3.30.9.10">
    <property type="entry name" value="D-Amino Acid Oxidase, subunit A, domain 2"/>
    <property type="match status" value="1"/>
</dbReference>
<dbReference type="Gene3D" id="3.50.50.60">
    <property type="entry name" value="FAD/NAD(P)-binding domain"/>
    <property type="match status" value="2"/>
</dbReference>
<dbReference type="HAMAP" id="MF_01202">
    <property type="entry name" value="DadA"/>
    <property type="match status" value="1"/>
</dbReference>
<dbReference type="InterPro" id="IPR023080">
    <property type="entry name" value="DadA"/>
</dbReference>
<dbReference type="InterPro" id="IPR006076">
    <property type="entry name" value="FAD-dep_OxRdtase"/>
</dbReference>
<dbReference type="InterPro" id="IPR036188">
    <property type="entry name" value="FAD/NAD-bd_sf"/>
</dbReference>
<dbReference type="NCBIfam" id="NF001933">
    <property type="entry name" value="PRK00711.1"/>
    <property type="match status" value="1"/>
</dbReference>
<dbReference type="PANTHER" id="PTHR13847:SF280">
    <property type="entry name" value="D-AMINO ACID DEHYDROGENASE"/>
    <property type="match status" value="1"/>
</dbReference>
<dbReference type="PANTHER" id="PTHR13847">
    <property type="entry name" value="SARCOSINE DEHYDROGENASE-RELATED"/>
    <property type="match status" value="1"/>
</dbReference>
<dbReference type="Pfam" id="PF01266">
    <property type="entry name" value="DAO"/>
    <property type="match status" value="1"/>
</dbReference>
<dbReference type="SUPFAM" id="SSF54373">
    <property type="entry name" value="FAD-linked reductases, C-terminal domain"/>
    <property type="match status" value="1"/>
</dbReference>
<dbReference type="SUPFAM" id="SSF51905">
    <property type="entry name" value="FAD/NAD(P)-binding domain"/>
    <property type="match status" value="1"/>
</dbReference>
<organism>
    <name type="scientific">Delftia acidovorans (strain DSM 14801 / SPH-1)</name>
    <dbReference type="NCBI Taxonomy" id="398578"/>
    <lineage>
        <taxon>Bacteria</taxon>
        <taxon>Pseudomonadati</taxon>
        <taxon>Pseudomonadota</taxon>
        <taxon>Betaproteobacteria</taxon>
        <taxon>Burkholderiales</taxon>
        <taxon>Comamonadaceae</taxon>
        <taxon>Delftia</taxon>
    </lineage>
</organism>
<feature type="chain" id="PRO_1000138647" description="D-amino acid dehydrogenase">
    <location>
        <begin position="1"/>
        <end position="432"/>
    </location>
</feature>
<feature type="binding site" evidence="1">
    <location>
        <begin position="3"/>
        <end position="17"/>
    </location>
    <ligand>
        <name>FAD</name>
        <dbReference type="ChEBI" id="CHEBI:57692"/>
    </ligand>
</feature>
<keyword id="KW-0274">FAD</keyword>
<keyword id="KW-0285">Flavoprotein</keyword>
<keyword id="KW-0560">Oxidoreductase</keyword>
<keyword id="KW-1185">Reference proteome</keyword>